<proteinExistence type="evidence at protein level"/>
<reference key="1">
    <citation type="journal article" date="1992" name="Nature">
        <title>The complete DNA sequence of yeast chromosome III.</title>
        <authorList>
            <person name="Oliver S.G."/>
            <person name="van der Aart Q.J.M."/>
            <person name="Agostoni-Carbone M.L."/>
            <person name="Aigle M."/>
            <person name="Alberghina L."/>
            <person name="Alexandraki D."/>
            <person name="Antoine G."/>
            <person name="Anwar R."/>
            <person name="Ballesta J.P.G."/>
            <person name="Benit P."/>
            <person name="Berben G."/>
            <person name="Bergantino E."/>
            <person name="Biteau N."/>
            <person name="Bolle P.-A."/>
            <person name="Bolotin-Fukuhara M."/>
            <person name="Brown A."/>
            <person name="Brown A.J.P."/>
            <person name="Buhler J.-M."/>
            <person name="Carcano C."/>
            <person name="Carignani G."/>
            <person name="Cederberg H."/>
            <person name="Chanet R."/>
            <person name="Contreras R."/>
            <person name="Crouzet M."/>
            <person name="Daignan-Fornier B."/>
            <person name="Defoor E."/>
            <person name="Delgado M.D."/>
            <person name="Demolder J."/>
            <person name="Doira C."/>
            <person name="Dubois E."/>
            <person name="Dujon B."/>
            <person name="Duesterhoeft A."/>
            <person name="Erdmann D."/>
            <person name="Esteban M."/>
            <person name="Fabre F."/>
            <person name="Fairhead C."/>
            <person name="Faye G."/>
            <person name="Feldmann H."/>
            <person name="Fiers W."/>
            <person name="Francingues-Gaillard M.-C."/>
            <person name="Franco L."/>
            <person name="Frontali L."/>
            <person name="Fukuhara H."/>
            <person name="Fuller L.J."/>
            <person name="Galland P."/>
            <person name="Gent M.E."/>
            <person name="Gigot D."/>
            <person name="Gilliquet V."/>
            <person name="Glansdorff N."/>
            <person name="Goffeau A."/>
            <person name="Grenson M."/>
            <person name="Grisanti P."/>
            <person name="Grivell L.A."/>
            <person name="de Haan M."/>
            <person name="Haasemann M."/>
            <person name="Hatat D."/>
            <person name="Hoenicka J."/>
            <person name="Hegemann J.H."/>
            <person name="Herbert C.J."/>
            <person name="Hilger F."/>
            <person name="Hohmann S."/>
            <person name="Hollenberg C.P."/>
            <person name="Huse K."/>
            <person name="Iborra F."/>
            <person name="Indge K.J."/>
            <person name="Isono K."/>
            <person name="Jacq C."/>
            <person name="Jacquet M."/>
            <person name="James C.M."/>
            <person name="Jauniaux J.-C."/>
            <person name="Jia Y."/>
            <person name="Jimenez A."/>
            <person name="Kelly A."/>
            <person name="Kleinhans U."/>
            <person name="Kreisl P."/>
            <person name="Lanfranchi G."/>
            <person name="Lewis C."/>
            <person name="van der Linden C.G."/>
            <person name="Lucchini G."/>
            <person name="Lutzenkirchen K."/>
            <person name="Maat M.J."/>
            <person name="Mallet L."/>
            <person name="Mannhaupt G."/>
            <person name="Martegani E."/>
            <person name="Mathieu A."/>
            <person name="Maurer C.T.C."/>
            <person name="McConnell D."/>
            <person name="McKee R.A."/>
            <person name="Messenguy F."/>
            <person name="Mewes H.-W."/>
            <person name="Molemans F."/>
            <person name="Montague M.A."/>
            <person name="Muzi Falconi M."/>
            <person name="Navas L."/>
            <person name="Newlon C.S."/>
            <person name="Noone D."/>
            <person name="Pallier C."/>
            <person name="Panzeri L."/>
            <person name="Pearson B.M."/>
            <person name="Perea J."/>
            <person name="Philippsen P."/>
            <person name="Pierard A."/>
            <person name="Planta R.J."/>
            <person name="Plevani P."/>
            <person name="Poetsch B."/>
            <person name="Pohl F.M."/>
            <person name="Purnelle B."/>
            <person name="Ramezani Rad M."/>
            <person name="Rasmussen S.W."/>
            <person name="Raynal A."/>
            <person name="Remacha M.A."/>
            <person name="Richterich P."/>
            <person name="Roberts A.B."/>
            <person name="Rodriguez F."/>
            <person name="Sanz E."/>
            <person name="Schaaff-Gerstenschlaeger I."/>
            <person name="Scherens B."/>
            <person name="Schweitzer B."/>
            <person name="Shu Y."/>
            <person name="Skala J."/>
            <person name="Slonimski P.P."/>
            <person name="Sor F."/>
            <person name="Soustelle C."/>
            <person name="Spiegelberg R."/>
            <person name="Stateva L.I."/>
            <person name="Steensma H.Y."/>
            <person name="Steiner S."/>
            <person name="Thierry A."/>
            <person name="Thireos G."/>
            <person name="Tzermia M."/>
            <person name="Urrestarazu L.A."/>
            <person name="Valle G."/>
            <person name="Vetter I."/>
            <person name="van Vliet-Reedijk J.C."/>
            <person name="Voet M."/>
            <person name="Volckaert G."/>
            <person name="Vreken P."/>
            <person name="Wang H."/>
            <person name="Warmington J.R."/>
            <person name="von Wettstein D."/>
            <person name="Wicksteed B.L."/>
            <person name="Wilson C."/>
            <person name="Wurst H."/>
            <person name="Xu G."/>
            <person name="Yoshikawa A."/>
            <person name="Zimmermann F.K."/>
            <person name="Sgouros J.G."/>
        </authorList>
    </citation>
    <scope>NUCLEOTIDE SEQUENCE [LARGE SCALE GENOMIC DNA]</scope>
    <source>
        <strain>ATCC 204508 / S288c</strain>
    </source>
</reference>
<reference key="2">
    <citation type="submission" date="2001-06" db="EMBL/GenBank/DDBJ databases">
        <authorList>
            <person name="Valles G."/>
            <person name="Volckaerts G."/>
        </authorList>
    </citation>
    <scope>SEQUENCE REVISION TO 176; 194; 206 AND 253</scope>
</reference>
<reference key="3">
    <citation type="journal article" date="2014" name="G3 (Bethesda)">
        <title>The reference genome sequence of Saccharomyces cerevisiae: Then and now.</title>
        <authorList>
            <person name="Engel S.R."/>
            <person name="Dietrich F.S."/>
            <person name="Fisk D.G."/>
            <person name="Binkley G."/>
            <person name="Balakrishnan R."/>
            <person name="Costanzo M.C."/>
            <person name="Dwight S.S."/>
            <person name="Hitz B.C."/>
            <person name="Karra K."/>
            <person name="Nash R.S."/>
            <person name="Weng S."/>
            <person name="Wong E.D."/>
            <person name="Lloyd P."/>
            <person name="Skrzypek M.S."/>
            <person name="Miyasato S.R."/>
            <person name="Simison M."/>
            <person name="Cherry J.M."/>
        </authorList>
    </citation>
    <scope>GENOME REANNOTATION</scope>
    <source>
        <strain>ATCC 204508 / S288c</strain>
    </source>
</reference>
<reference key="4">
    <citation type="journal article" date="2003" name="Nature">
        <title>Global analysis of protein expression in yeast.</title>
        <authorList>
            <person name="Ghaemmaghami S."/>
            <person name="Huh W.-K."/>
            <person name="Bower K."/>
            <person name="Howson R.W."/>
            <person name="Belle A."/>
            <person name="Dephoure N."/>
            <person name="O'Shea E.K."/>
            <person name="Weissman J.S."/>
        </authorList>
    </citation>
    <scope>LEVEL OF PROTEIN EXPRESSION [LARGE SCALE ANALYSIS]</scope>
</reference>
<evidence type="ECO:0000255" key="1"/>
<evidence type="ECO:0000269" key="2">
    <source>
    </source>
</evidence>
<comment type="miscellaneous">
    <text evidence="2">Present with 656 molecules/cell in log phase SD medium.</text>
</comment>
<accession>P25577</accession>
<accession>D6VQW7</accession>
<accession>Q8NIN1</accession>
<gene>
    <name type="ordered locus">YCL049C</name>
    <name type="ORF">YCL49C</name>
</gene>
<name>YCE9_YEAST</name>
<organism>
    <name type="scientific">Saccharomyces cerevisiae (strain ATCC 204508 / S288c)</name>
    <name type="common">Baker's yeast</name>
    <dbReference type="NCBI Taxonomy" id="559292"/>
    <lineage>
        <taxon>Eukaryota</taxon>
        <taxon>Fungi</taxon>
        <taxon>Dikarya</taxon>
        <taxon>Ascomycota</taxon>
        <taxon>Saccharomycotina</taxon>
        <taxon>Saccharomycetes</taxon>
        <taxon>Saccharomycetales</taxon>
        <taxon>Saccharomycetaceae</taxon>
        <taxon>Saccharomyces</taxon>
    </lineage>
</organism>
<feature type="signal peptide" evidence="1">
    <location>
        <begin position="1"/>
        <end position="19"/>
    </location>
</feature>
<feature type="chain" id="PRO_0000014312" description="Uncharacterized protein YCL049C">
    <location>
        <begin position="20"/>
        <end position="312"/>
    </location>
</feature>
<keyword id="KW-1185">Reference proteome</keyword>
<keyword id="KW-0732">Signal</keyword>
<sequence length="312" mass="35652">MFSKYLVTASSLFVALTSAASTVDLDALLLLPGVESHDGVDTVFSTKDFYQVSFVKSIAPAIVNSSVIFHDVSRGVAMGNVKSRASIFNPEETYYDWEQYQVVNNGDWRTEWAPASDCIWREEKDNSDETPDRFPISVPYNWTSQYSIVDYDTDANEDNLDFRFIKSLLDKKNWLKKINQTVSQSSIMVAPMIRPYNVVQLWYSKDMVWANVQRQYCSGVYPGGTQCSAWSRYYHVDAPTCDEPVASYMTKMLENEVQCPNERNATTLEPLRLNKQGDSDFSLTFEEEEEEETGSKSLWSTLKKIFSKRSIS</sequence>
<protein>
    <recommendedName>
        <fullName>Uncharacterized protein YCL049C</fullName>
    </recommendedName>
</protein>
<dbReference type="EMBL" id="X59720">
    <property type="protein sequence ID" value="CAC42955.1"/>
    <property type="molecule type" value="Genomic_DNA"/>
</dbReference>
<dbReference type="EMBL" id="BK006937">
    <property type="protein sequence ID" value="DAA07436.1"/>
    <property type="molecule type" value="Genomic_DNA"/>
</dbReference>
<dbReference type="PIR" id="S19378">
    <property type="entry name" value="S19378"/>
</dbReference>
<dbReference type="RefSeq" id="NP_009881.2">
    <property type="nucleotide sequence ID" value="NM_001178694.1"/>
</dbReference>
<dbReference type="BioGRID" id="30936">
    <property type="interactions" value="46"/>
</dbReference>
<dbReference type="DIP" id="DIP-4885N"/>
<dbReference type="FunCoup" id="P25577">
    <property type="interactions" value="43"/>
</dbReference>
<dbReference type="IntAct" id="P25577">
    <property type="interactions" value="1"/>
</dbReference>
<dbReference type="STRING" id="4932.YCL049C"/>
<dbReference type="PaxDb" id="4932-YCL049C"/>
<dbReference type="PeptideAtlas" id="P25577"/>
<dbReference type="EnsemblFungi" id="YCL049C_mRNA">
    <property type="protein sequence ID" value="YCL049C"/>
    <property type="gene ID" value="YCL049C"/>
</dbReference>
<dbReference type="GeneID" id="850308"/>
<dbReference type="KEGG" id="sce:YCL049C"/>
<dbReference type="AGR" id="SGD:S000000554"/>
<dbReference type="SGD" id="S000000554">
    <property type="gene designation" value="YCL049C"/>
</dbReference>
<dbReference type="VEuPathDB" id="FungiDB:YCL049C"/>
<dbReference type="eggNOG" id="ENOG502S1C8">
    <property type="taxonomic scope" value="Eukaryota"/>
</dbReference>
<dbReference type="HOGENOM" id="CLU_906759_0_0_1"/>
<dbReference type="InParanoid" id="P25577"/>
<dbReference type="OMA" id="NGDWRTE"/>
<dbReference type="OrthoDB" id="4039751at2759"/>
<dbReference type="BioCyc" id="YEAST:G3O-29304-MONOMER"/>
<dbReference type="BioGRID-ORCS" id="850308">
    <property type="hits" value="0 hits in 10 CRISPR screens"/>
</dbReference>
<dbReference type="PRO" id="PR:P25577"/>
<dbReference type="Proteomes" id="UP000002311">
    <property type="component" value="Chromosome III"/>
</dbReference>
<dbReference type="RNAct" id="P25577">
    <property type="molecule type" value="protein"/>
</dbReference>
<dbReference type="GO" id="GO:0016020">
    <property type="term" value="C:membrane"/>
    <property type="evidence" value="ECO:0000314"/>
    <property type="project" value="SGD"/>
</dbReference>